<gene>
    <name evidence="1" type="primary">xni</name>
    <name evidence="1" type="synonym">ygdG</name>
    <name type="ordered locus">SG1952</name>
</gene>
<evidence type="ECO:0000255" key="1">
    <source>
        <dbReference type="HAMAP-Rule" id="MF_01192"/>
    </source>
</evidence>
<reference key="1">
    <citation type="journal article" date="2006" name="Genome Res.">
        <title>Massive genome erosion and functional adaptations provide insights into the symbiotic lifestyle of Sodalis glossinidius in the tsetse host.</title>
        <authorList>
            <person name="Toh H."/>
            <person name="Weiss B.L."/>
            <person name="Perkin S.A.H."/>
            <person name="Yamashita A."/>
            <person name="Oshima K."/>
            <person name="Hattori M."/>
            <person name="Aksoy S."/>
        </authorList>
    </citation>
    <scope>NUCLEOTIDE SEQUENCE [LARGE SCALE GENOMIC DNA]</scope>
    <source>
        <strain>morsitans</strain>
    </source>
</reference>
<organism>
    <name type="scientific">Sodalis glossinidius (strain morsitans)</name>
    <dbReference type="NCBI Taxonomy" id="343509"/>
    <lineage>
        <taxon>Bacteria</taxon>
        <taxon>Pseudomonadati</taxon>
        <taxon>Pseudomonadota</taxon>
        <taxon>Gammaproteobacteria</taxon>
        <taxon>Enterobacterales</taxon>
        <taxon>Bruguierivoracaceae</taxon>
        <taxon>Sodalis</taxon>
    </lineage>
</organism>
<proteinExistence type="inferred from homology"/>
<sequence>MSVHLLIVDALNLIRRIHAVQGASCLAACGHALSQLILHCTPSHAVAVFDDDERHESWRHQQLPQYKSGRAPIPEDLQALMPAIRAEFNRQSVTCWHASGFEADDIAATLAIKVAAGGHRVTLVSTDKGYCQLLSPSIQIRDYFQKRWLDMPFVMRHFGVQPQQLTDFWGLAGVSSSKIPGVAGIGPKSAAQLISEAGTLEALYQRLAQLPEKWRHRLEHDRDLAFLCRRIVTLDTAVTLQGNLQQLRLR</sequence>
<dbReference type="EC" id="3.1.-.-" evidence="1"/>
<dbReference type="EMBL" id="AP008232">
    <property type="protein sequence ID" value="BAE75227.1"/>
    <property type="molecule type" value="Genomic_DNA"/>
</dbReference>
<dbReference type="RefSeq" id="WP_011411683.1">
    <property type="nucleotide sequence ID" value="NC_007712.1"/>
</dbReference>
<dbReference type="SMR" id="Q2NRJ8"/>
<dbReference type="STRING" id="343509.SG1952"/>
<dbReference type="KEGG" id="sgl:SG1952"/>
<dbReference type="eggNOG" id="COG0258">
    <property type="taxonomic scope" value="Bacteria"/>
</dbReference>
<dbReference type="HOGENOM" id="CLU_004675_1_2_6"/>
<dbReference type="OrthoDB" id="8070997at2"/>
<dbReference type="BioCyc" id="SGLO343509:SGP1_RS17895-MONOMER"/>
<dbReference type="Proteomes" id="UP000001932">
    <property type="component" value="Chromosome"/>
</dbReference>
<dbReference type="GO" id="GO:0008409">
    <property type="term" value="F:5'-3' exonuclease activity"/>
    <property type="evidence" value="ECO:0007669"/>
    <property type="project" value="InterPro"/>
</dbReference>
<dbReference type="GO" id="GO:0017108">
    <property type="term" value="F:5'-flap endonuclease activity"/>
    <property type="evidence" value="ECO:0007669"/>
    <property type="project" value="UniProtKB-UniRule"/>
</dbReference>
<dbReference type="GO" id="GO:0003677">
    <property type="term" value="F:DNA binding"/>
    <property type="evidence" value="ECO:0007669"/>
    <property type="project" value="UniProtKB-UniRule"/>
</dbReference>
<dbReference type="GO" id="GO:0000287">
    <property type="term" value="F:magnesium ion binding"/>
    <property type="evidence" value="ECO:0007669"/>
    <property type="project" value="UniProtKB-UniRule"/>
</dbReference>
<dbReference type="GO" id="GO:0030955">
    <property type="term" value="F:potassium ion binding"/>
    <property type="evidence" value="ECO:0007669"/>
    <property type="project" value="UniProtKB-UniRule"/>
</dbReference>
<dbReference type="GO" id="GO:0033567">
    <property type="term" value="P:DNA replication, Okazaki fragment processing"/>
    <property type="evidence" value="ECO:0007669"/>
    <property type="project" value="UniProtKB-UniRule"/>
</dbReference>
<dbReference type="CDD" id="cd09898">
    <property type="entry name" value="H3TH_53EXO"/>
    <property type="match status" value="1"/>
</dbReference>
<dbReference type="CDD" id="cd09859">
    <property type="entry name" value="PIN_53EXO"/>
    <property type="match status" value="1"/>
</dbReference>
<dbReference type="FunFam" id="1.10.150.20:FF:000003">
    <property type="entry name" value="DNA polymerase I"/>
    <property type="match status" value="1"/>
</dbReference>
<dbReference type="Gene3D" id="1.10.150.20">
    <property type="entry name" value="5' to 3' exonuclease, C-terminal subdomain"/>
    <property type="match status" value="1"/>
</dbReference>
<dbReference type="Gene3D" id="3.40.50.1010">
    <property type="entry name" value="5'-nuclease"/>
    <property type="match status" value="1"/>
</dbReference>
<dbReference type="HAMAP" id="MF_01192">
    <property type="entry name" value="Xni"/>
    <property type="match status" value="1"/>
</dbReference>
<dbReference type="InterPro" id="IPR020046">
    <property type="entry name" value="5-3_exonucl_a-hlix_arch_N"/>
</dbReference>
<dbReference type="InterPro" id="IPR002421">
    <property type="entry name" value="5-3_exonuclease"/>
</dbReference>
<dbReference type="InterPro" id="IPR036279">
    <property type="entry name" value="5-3_exonuclease_C_sf"/>
</dbReference>
<dbReference type="InterPro" id="IPR020045">
    <property type="entry name" value="DNA_polI_H3TH"/>
</dbReference>
<dbReference type="InterPro" id="IPR038969">
    <property type="entry name" value="FEN"/>
</dbReference>
<dbReference type="InterPro" id="IPR008918">
    <property type="entry name" value="HhH2"/>
</dbReference>
<dbReference type="InterPro" id="IPR029060">
    <property type="entry name" value="PIN-like_dom_sf"/>
</dbReference>
<dbReference type="InterPro" id="IPR022895">
    <property type="entry name" value="Xni"/>
</dbReference>
<dbReference type="NCBIfam" id="NF007017">
    <property type="entry name" value="PRK09482.1"/>
    <property type="match status" value="1"/>
</dbReference>
<dbReference type="PANTHER" id="PTHR42646:SF2">
    <property type="entry name" value="5'-3' EXONUCLEASE FAMILY PROTEIN"/>
    <property type="match status" value="1"/>
</dbReference>
<dbReference type="PANTHER" id="PTHR42646">
    <property type="entry name" value="FLAP ENDONUCLEASE XNI"/>
    <property type="match status" value="1"/>
</dbReference>
<dbReference type="Pfam" id="PF01367">
    <property type="entry name" value="5_3_exonuc"/>
    <property type="match status" value="1"/>
</dbReference>
<dbReference type="Pfam" id="PF02739">
    <property type="entry name" value="5_3_exonuc_N"/>
    <property type="match status" value="1"/>
</dbReference>
<dbReference type="SMART" id="SM00475">
    <property type="entry name" value="53EXOc"/>
    <property type="match status" value="1"/>
</dbReference>
<dbReference type="SMART" id="SM00279">
    <property type="entry name" value="HhH2"/>
    <property type="match status" value="1"/>
</dbReference>
<dbReference type="SUPFAM" id="SSF47807">
    <property type="entry name" value="5' to 3' exonuclease, C-terminal subdomain"/>
    <property type="match status" value="1"/>
</dbReference>
<dbReference type="SUPFAM" id="SSF88723">
    <property type="entry name" value="PIN domain-like"/>
    <property type="match status" value="1"/>
</dbReference>
<keyword id="KW-0238">DNA-binding</keyword>
<keyword id="KW-0255">Endonuclease</keyword>
<keyword id="KW-0378">Hydrolase</keyword>
<keyword id="KW-0460">Magnesium</keyword>
<keyword id="KW-0479">Metal-binding</keyword>
<keyword id="KW-0540">Nuclease</keyword>
<keyword id="KW-0630">Potassium</keyword>
<name>XNI_SODGM</name>
<protein>
    <recommendedName>
        <fullName evidence="1">Flap endonuclease Xni</fullName>
        <shortName evidence="1">FEN</shortName>
        <ecNumber evidence="1">3.1.-.-</ecNumber>
    </recommendedName>
</protein>
<comment type="function">
    <text evidence="1">Has flap endonuclease activity. During DNA replication, flap endonucleases cleave the 5'-overhanging flap structure that is generated by displacement synthesis when DNA polymerase encounters the 5'-end of a downstream Okazaki fragment.</text>
</comment>
<comment type="cofactor">
    <cofactor evidence="1">
        <name>Mg(2+)</name>
        <dbReference type="ChEBI" id="CHEBI:18420"/>
    </cofactor>
    <text evidence="1">Binds 2 Mg(2+) per subunit. Only one magnesium ion has a direct interaction with the protein, the other interactions are indirect.</text>
</comment>
<comment type="cofactor">
    <cofactor evidence="1">
        <name>K(+)</name>
        <dbReference type="ChEBI" id="CHEBI:29103"/>
    </cofactor>
    <text evidence="1">Binds 1 K(+) per subunit. The potassium ion strongly increases the affinity for DNA.</text>
</comment>
<comment type="similarity">
    <text evidence="1">Belongs to the Xni family.</text>
</comment>
<accession>Q2NRJ8</accession>
<feature type="chain" id="PRO_0000297887" description="Flap endonuclease Xni">
    <location>
        <begin position="1"/>
        <end position="250"/>
    </location>
</feature>
<feature type="domain" description="5'-3' exonuclease" evidence="1">
    <location>
        <begin position="160"/>
        <end position="249"/>
    </location>
</feature>
<feature type="region of interest" description="Interaction with DNA" evidence="1">
    <location>
        <begin position="184"/>
        <end position="189"/>
    </location>
</feature>
<feature type="binding site" evidence="1">
    <location>
        <position position="104"/>
    </location>
    <ligand>
        <name>Mg(2+)</name>
        <dbReference type="ChEBI" id="CHEBI:18420"/>
    </ligand>
</feature>
<feature type="binding site" evidence="1">
    <location>
        <position position="171"/>
    </location>
    <ligand>
        <name>K(+)</name>
        <dbReference type="ChEBI" id="CHEBI:29103"/>
    </ligand>
</feature>
<feature type="binding site" evidence="1">
    <location>
        <position position="172"/>
    </location>
    <ligand>
        <name>K(+)</name>
        <dbReference type="ChEBI" id="CHEBI:29103"/>
    </ligand>
</feature>
<feature type="binding site" evidence="1">
    <location>
        <position position="180"/>
    </location>
    <ligand>
        <name>K(+)</name>
        <dbReference type="ChEBI" id="CHEBI:29103"/>
    </ligand>
</feature>
<feature type="binding site" evidence="1">
    <location>
        <position position="182"/>
    </location>
    <ligand>
        <name>K(+)</name>
        <dbReference type="ChEBI" id="CHEBI:29103"/>
    </ligand>
</feature>
<feature type="binding site" evidence="1">
    <location>
        <position position="185"/>
    </location>
    <ligand>
        <name>K(+)</name>
        <dbReference type="ChEBI" id="CHEBI:29103"/>
    </ligand>
</feature>